<protein>
    <recommendedName>
        <fullName>Altered inheritance of mitochondria protein 36, mitochondrial</fullName>
    </recommendedName>
    <alternativeName>
        <fullName>Found in mitochondria protein 39</fullName>
    </alternativeName>
</protein>
<dbReference type="EMBL" id="CR380959">
    <property type="protein sequence ID" value="CAG62741.1"/>
    <property type="molecule type" value="Genomic_DNA"/>
</dbReference>
<dbReference type="RefSeq" id="XP_449763.1">
    <property type="nucleotide sequence ID" value="XM_449763.1"/>
</dbReference>
<dbReference type="FunCoup" id="Q6FJ31">
    <property type="interactions" value="26"/>
</dbReference>
<dbReference type="STRING" id="284593.Q6FJ31"/>
<dbReference type="EnsemblFungi" id="CAGL0M09614g-T">
    <property type="protein sequence ID" value="CAGL0M09614g-T-p1"/>
    <property type="gene ID" value="CAGL0M09614g"/>
</dbReference>
<dbReference type="KEGG" id="cgr:2891327"/>
<dbReference type="CGD" id="CAL0137381">
    <property type="gene designation" value="CAGL0M09614g"/>
</dbReference>
<dbReference type="VEuPathDB" id="FungiDB:CAGL0M09614g"/>
<dbReference type="eggNOG" id="ENOG502S2G9">
    <property type="taxonomic scope" value="Eukaryota"/>
</dbReference>
<dbReference type="HOGENOM" id="CLU_090420_0_0_1"/>
<dbReference type="InParanoid" id="Q6FJ31"/>
<dbReference type="OMA" id="RVAIFPQ"/>
<dbReference type="Proteomes" id="UP000002428">
    <property type="component" value="Chromosome M"/>
</dbReference>
<dbReference type="GO" id="GO:0031966">
    <property type="term" value="C:mitochondrial membrane"/>
    <property type="evidence" value="ECO:0007669"/>
    <property type="project" value="UniProtKB-SubCell"/>
</dbReference>
<accession>Q6FJ31</accession>
<evidence type="ECO:0000250" key="1"/>
<evidence type="ECO:0000255" key="2"/>
<evidence type="ECO:0000305" key="3"/>
<sequence>MALMRLGLRIPARLGSNLPVAQLGIRAAKHRFYATAPRNDGGELPSIKKLLMIGLAGTAVFVLAVNSLDKQQPKNSYSESEFESLQRLKRKVALFPGNQLKVYGVLGTEKYNKIVSGGKIVDPRKIIEKHRTTAGDRYEALLNILYDKYGAVEYFDMLPQGLMVKLVSLYMKDNCSEGDTVVILDFPKSIKDASQFETEVAGISKFIVSQKLKDTDICKYYDAVGKLESV</sequence>
<comment type="subcellular location">
    <subcellularLocation>
        <location evidence="1">Mitochondrion membrane</location>
        <topology evidence="1">Single-pass membrane protein</topology>
    </subcellularLocation>
</comment>
<comment type="similarity">
    <text evidence="3">Belongs to the AIM36 family.</text>
</comment>
<proteinExistence type="inferred from homology"/>
<reference key="1">
    <citation type="journal article" date="2004" name="Nature">
        <title>Genome evolution in yeasts.</title>
        <authorList>
            <person name="Dujon B."/>
            <person name="Sherman D."/>
            <person name="Fischer G."/>
            <person name="Durrens P."/>
            <person name="Casaregola S."/>
            <person name="Lafontaine I."/>
            <person name="de Montigny J."/>
            <person name="Marck C."/>
            <person name="Neuveglise C."/>
            <person name="Talla E."/>
            <person name="Goffard N."/>
            <person name="Frangeul L."/>
            <person name="Aigle M."/>
            <person name="Anthouard V."/>
            <person name="Babour A."/>
            <person name="Barbe V."/>
            <person name="Barnay S."/>
            <person name="Blanchin S."/>
            <person name="Beckerich J.-M."/>
            <person name="Beyne E."/>
            <person name="Bleykasten C."/>
            <person name="Boisrame A."/>
            <person name="Boyer J."/>
            <person name="Cattolico L."/>
            <person name="Confanioleri F."/>
            <person name="de Daruvar A."/>
            <person name="Despons L."/>
            <person name="Fabre E."/>
            <person name="Fairhead C."/>
            <person name="Ferry-Dumazet H."/>
            <person name="Groppi A."/>
            <person name="Hantraye F."/>
            <person name="Hennequin C."/>
            <person name="Jauniaux N."/>
            <person name="Joyet P."/>
            <person name="Kachouri R."/>
            <person name="Kerrest A."/>
            <person name="Koszul R."/>
            <person name="Lemaire M."/>
            <person name="Lesur I."/>
            <person name="Ma L."/>
            <person name="Muller H."/>
            <person name="Nicaud J.-M."/>
            <person name="Nikolski M."/>
            <person name="Oztas S."/>
            <person name="Ozier-Kalogeropoulos O."/>
            <person name="Pellenz S."/>
            <person name="Potier S."/>
            <person name="Richard G.-F."/>
            <person name="Straub M.-L."/>
            <person name="Suleau A."/>
            <person name="Swennen D."/>
            <person name="Tekaia F."/>
            <person name="Wesolowski-Louvel M."/>
            <person name="Westhof E."/>
            <person name="Wirth B."/>
            <person name="Zeniou-Meyer M."/>
            <person name="Zivanovic Y."/>
            <person name="Bolotin-Fukuhara M."/>
            <person name="Thierry A."/>
            <person name="Bouchier C."/>
            <person name="Caudron B."/>
            <person name="Scarpelli C."/>
            <person name="Gaillardin C."/>
            <person name="Weissenbach J."/>
            <person name="Wincker P."/>
            <person name="Souciet J.-L."/>
        </authorList>
    </citation>
    <scope>NUCLEOTIDE SEQUENCE [LARGE SCALE GENOMIC DNA]</scope>
    <source>
        <strain>ATCC 2001 / BCRC 20586 / JCM 3761 / NBRC 0622 / NRRL Y-65 / CBS 138</strain>
    </source>
</reference>
<gene>
    <name type="primary">AIM36</name>
    <name type="synonym">FMP39</name>
    <name type="ordered locus">CAGL0M09614g</name>
</gene>
<name>AIM36_CANGA</name>
<organism>
    <name type="scientific">Candida glabrata (strain ATCC 2001 / BCRC 20586 / JCM 3761 / NBRC 0622 / NRRL Y-65 / CBS 138)</name>
    <name type="common">Yeast</name>
    <name type="synonym">Nakaseomyces glabratus</name>
    <dbReference type="NCBI Taxonomy" id="284593"/>
    <lineage>
        <taxon>Eukaryota</taxon>
        <taxon>Fungi</taxon>
        <taxon>Dikarya</taxon>
        <taxon>Ascomycota</taxon>
        <taxon>Saccharomycotina</taxon>
        <taxon>Saccharomycetes</taxon>
        <taxon>Saccharomycetales</taxon>
        <taxon>Saccharomycetaceae</taxon>
        <taxon>Nakaseomyces</taxon>
    </lineage>
</organism>
<keyword id="KW-0472">Membrane</keyword>
<keyword id="KW-0496">Mitochondrion</keyword>
<keyword id="KW-1185">Reference proteome</keyword>
<keyword id="KW-0809">Transit peptide</keyword>
<keyword id="KW-0812">Transmembrane</keyword>
<keyword id="KW-1133">Transmembrane helix</keyword>
<feature type="transit peptide" description="Mitochondrion" evidence="2">
    <location>
        <begin position="1"/>
        <end position="33"/>
    </location>
</feature>
<feature type="chain" id="PRO_0000399722" description="Altered inheritance of mitochondria protein 36, mitochondrial">
    <location>
        <begin position="34"/>
        <end position="230"/>
    </location>
</feature>
<feature type="transmembrane region" description="Helical" evidence="2">
    <location>
        <begin position="50"/>
        <end position="68"/>
    </location>
</feature>